<organism>
    <name type="scientific">Bos taurus</name>
    <name type="common">Bovine</name>
    <dbReference type="NCBI Taxonomy" id="9913"/>
    <lineage>
        <taxon>Eukaryota</taxon>
        <taxon>Metazoa</taxon>
        <taxon>Chordata</taxon>
        <taxon>Craniata</taxon>
        <taxon>Vertebrata</taxon>
        <taxon>Euteleostomi</taxon>
        <taxon>Mammalia</taxon>
        <taxon>Eutheria</taxon>
        <taxon>Laurasiatheria</taxon>
        <taxon>Artiodactyla</taxon>
        <taxon>Ruminantia</taxon>
        <taxon>Pecora</taxon>
        <taxon>Bovidae</taxon>
        <taxon>Bovinae</taxon>
        <taxon>Bos</taxon>
    </lineage>
</organism>
<sequence length="270" mass="29180">MAAWGERLAGVRGVLLDISGVLYDGGEGGGAAIAGSVEAVARLKRSRLKVRFCTNESQKSRADLVGLLRRLGFDVSEGEVTAPAPAACLILKQRGLRPHLLVHDGVRSEFDQIDTSNPNCVVIADAGEGFSYQNMNKAFQVLMELENPVLFSLGKGRYYKETSGLMLDVGPYMKALEYACGIEAEVVGKPSPEFFKSALQEMGVEAHEAIMIGDDIVGDVGGAQRYGMRALQVRTGKFRPSDEHHPEVKADGYVDNLAEAVDLLLQHADK</sequence>
<accession>Q0VD18</accession>
<dbReference type="EC" id="3.1.3.-"/>
<dbReference type="EC" id="3.6.1.1"/>
<dbReference type="EMBL" id="BC119882">
    <property type="protein sequence ID" value="AAI19883.1"/>
    <property type="molecule type" value="mRNA"/>
</dbReference>
<dbReference type="RefSeq" id="NP_001074381.1">
    <property type="nucleotide sequence ID" value="NM_001080912.1"/>
</dbReference>
<dbReference type="SMR" id="Q0VD18"/>
<dbReference type="FunCoup" id="Q0VD18">
    <property type="interactions" value="260"/>
</dbReference>
<dbReference type="STRING" id="9913.ENSBTAP00000047621"/>
<dbReference type="PaxDb" id="9913-ENSBTAP00000047621"/>
<dbReference type="Ensembl" id="ENSBTAT00000056613.4">
    <property type="protein sequence ID" value="ENSBTAP00000047621.2"/>
    <property type="gene ID" value="ENSBTAG00000010957.7"/>
</dbReference>
<dbReference type="GeneID" id="534183"/>
<dbReference type="KEGG" id="bta:534183"/>
<dbReference type="CTD" id="64077"/>
<dbReference type="VEuPathDB" id="HostDB:ENSBTAG00000010957"/>
<dbReference type="VGNC" id="VGNC:30870">
    <property type="gene designation" value="LHPP"/>
</dbReference>
<dbReference type="eggNOG" id="KOG3040">
    <property type="taxonomic scope" value="Eukaryota"/>
</dbReference>
<dbReference type="GeneTree" id="ENSGT00940000159002"/>
<dbReference type="HOGENOM" id="CLU_043473_4_1_1"/>
<dbReference type="InParanoid" id="Q0VD18"/>
<dbReference type="OMA" id="EEHIFMP"/>
<dbReference type="OrthoDB" id="426235at2759"/>
<dbReference type="TreeFam" id="TF314344"/>
<dbReference type="Reactome" id="R-BTA-71737">
    <property type="pathway name" value="Pyrophosphate hydrolysis"/>
</dbReference>
<dbReference type="Proteomes" id="UP000009136">
    <property type="component" value="Chromosome 26"/>
</dbReference>
<dbReference type="Bgee" id="ENSBTAG00000010957">
    <property type="expression patterns" value="Expressed in laryngeal cartilage and 103 other cell types or tissues"/>
</dbReference>
<dbReference type="GO" id="GO:0005737">
    <property type="term" value="C:cytoplasm"/>
    <property type="evidence" value="ECO:0000318"/>
    <property type="project" value="GO_Central"/>
</dbReference>
<dbReference type="GO" id="GO:0005829">
    <property type="term" value="C:cytosol"/>
    <property type="evidence" value="ECO:0000250"/>
    <property type="project" value="UniProtKB"/>
</dbReference>
<dbReference type="GO" id="GO:0005634">
    <property type="term" value="C:nucleus"/>
    <property type="evidence" value="ECO:0000250"/>
    <property type="project" value="UniProtKB"/>
</dbReference>
<dbReference type="GO" id="GO:0004427">
    <property type="term" value="F:inorganic diphosphate phosphatase activity"/>
    <property type="evidence" value="ECO:0000314"/>
    <property type="project" value="UniProtKB"/>
</dbReference>
<dbReference type="GO" id="GO:0046872">
    <property type="term" value="F:metal ion binding"/>
    <property type="evidence" value="ECO:0007669"/>
    <property type="project" value="UniProtKB-KW"/>
</dbReference>
<dbReference type="GO" id="GO:0016791">
    <property type="term" value="F:phosphatase activity"/>
    <property type="evidence" value="ECO:0000318"/>
    <property type="project" value="GO_Central"/>
</dbReference>
<dbReference type="GO" id="GO:0006796">
    <property type="term" value="P:phosphate-containing compound metabolic process"/>
    <property type="evidence" value="ECO:0000250"/>
    <property type="project" value="UniProtKB"/>
</dbReference>
<dbReference type="CDD" id="cd07509">
    <property type="entry name" value="HAD_PPase"/>
    <property type="match status" value="1"/>
</dbReference>
<dbReference type="FunFam" id="3.40.50.1000:FF:000051">
    <property type="entry name" value="Phospholysine phosphohistidine inorganic pyrophosphate phosphatase"/>
    <property type="match status" value="1"/>
</dbReference>
<dbReference type="Gene3D" id="3.40.50.1000">
    <property type="entry name" value="HAD superfamily/HAD-like"/>
    <property type="match status" value="2"/>
</dbReference>
<dbReference type="InterPro" id="IPR036412">
    <property type="entry name" value="HAD-like_sf"/>
</dbReference>
<dbReference type="InterPro" id="IPR006357">
    <property type="entry name" value="HAD-SF_hydro_IIA"/>
</dbReference>
<dbReference type="InterPro" id="IPR023214">
    <property type="entry name" value="HAD_sf"/>
</dbReference>
<dbReference type="InterPro" id="IPR006355">
    <property type="entry name" value="LHPP/HDHD2"/>
</dbReference>
<dbReference type="NCBIfam" id="TIGR01460">
    <property type="entry name" value="HAD-SF-IIA"/>
    <property type="match status" value="1"/>
</dbReference>
<dbReference type="NCBIfam" id="TIGR01458">
    <property type="entry name" value="HAD-SF-IIA-hyp3"/>
    <property type="match status" value="1"/>
</dbReference>
<dbReference type="PANTHER" id="PTHR19288">
    <property type="entry name" value="4-NITROPHENYLPHOSPHATASE-RELATED"/>
    <property type="match status" value="1"/>
</dbReference>
<dbReference type="PANTHER" id="PTHR19288:SF44">
    <property type="entry name" value="PHOSPHOLYSINE PHOSPHOHISTIDINE INORGANIC PYROPHOSPHATE PHOSPHATASE"/>
    <property type="match status" value="1"/>
</dbReference>
<dbReference type="Pfam" id="PF13344">
    <property type="entry name" value="Hydrolase_6"/>
    <property type="match status" value="1"/>
</dbReference>
<dbReference type="Pfam" id="PF13242">
    <property type="entry name" value="Hydrolase_like"/>
    <property type="match status" value="1"/>
</dbReference>
<dbReference type="SUPFAM" id="SSF56784">
    <property type="entry name" value="HAD-like"/>
    <property type="match status" value="1"/>
</dbReference>
<keyword id="KW-0963">Cytoplasm</keyword>
<keyword id="KW-0378">Hydrolase</keyword>
<keyword id="KW-0460">Magnesium</keyword>
<keyword id="KW-0479">Metal-binding</keyword>
<keyword id="KW-0539">Nucleus</keyword>
<keyword id="KW-1185">Reference proteome</keyword>
<feature type="chain" id="PRO_0000305073" description="Phospholysine phosphohistidine inorganic pyrophosphate phosphatase">
    <location>
        <begin position="1"/>
        <end position="270"/>
    </location>
</feature>
<feature type="binding site" evidence="1">
    <location>
        <begin position="17"/>
        <end position="19"/>
    </location>
    <ligand>
        <name>substrate</name>
    </ligand>
</feature>
<feature type="binding site" evidence="1">
    <location>
        <position position="17"/>
    </location>
    <ligand>
        <name>Mg(2+)</name>
        <dbReference type="ChEBI" id="CHEBI:18420"/>
    </ligand>
</feature>
<feature type="binding site" evidence="1">
    <location>
        <position position="19"/>
    </location>
    <ligand>
        <name>Mg(2+)</name>
        <dbReference type="ChEBI" id="CHEBI:18420"/>
    </ligand>
</feature>
<feature type="binding site" evidence="1">
    <location>
        <begin position="54"/>
        <end position="55"/>
    </location>
    <ligand>
        <name>substrate</name>
    </ligand>
</feature>
<feature type="binding site" evidence="1">
    <location>
        <position position="189"/>
    </location>
    <ligand>
        <name>substrate</name>
    </ligand>
</feature>
<feature type="binding site" evidence="1">
    <location>
        <position position="214"/>
    </location>
    <ligand>
        <name>Mg(2+)</name>
        <dbReference type="ChEBI" id="CHEBI:18420"/>
    </ligand>
</feature>
<proteinExistence type="evidence at protein level"/>
<protein>
    <recommendedName>
        <fullName>Phospholysine phosphohistidine inorganic pyrophosphate phosphatase</fullName>
        <ecNumber>3.1.3.-</ecNumber>
        <ecNumber>3.6.1.1</ecNumber>
    </recommendedName>
</protein>
<name>LHPP_BOVIN</name>
<reference key="1">
    <citation type="submission" date="2006-08" db="EMBL/GenBank/DDBJ databases">
        <authorList>
            <consortium name="NIH - Mammalian Gene Collection (MGC) project"/>
        </authorList>
    </citation>
    <scope>NUCLEOTIDE SEQUENCE [LARGE SCALE MRNA]</scope>
    <source>
        <tissue>Liver</tissue>
    </source>
</reference>
<reference key="2">
    <citation type="journal article" date="1998" name="Arch. Biochem. Biophys.">
        <title>3-phosphohistidine and 6-phospholysine are substrates of a 56-kDa inorganic pyrophosphatase from bovine liver.</title>
        <authorList>
            <person name="Hiraishi H."/>
            <person name="Yokoi F."/>
            <person name="Kumon A."/>
        </authorList>
    </citation>
    <scope>FUNCTION</scope>
    <scope>CATALYTIC ACTIVITY</scope>
    <scope>COFACTOR</scope>
    <scope>SUBUNIT</scope>
    <scope>TISSUE SPECIFICITY</scope>
</reference>
<reference key="3">
    <citation type="journal article" date="2003" name="J. Biochem.">
        <title>Molecular cloning of a cDNA for the human phospholysine phosphohistidine inorganic pyrophosphate phosphatase.</title>
        <authorList>
            <person name="Yokoi F."/>
            <person name="Hiraishi H."/>
            <person name="Izuhara K."/>
        </authorList>
    </citation>
    <scope>IDENTIFICATION BY MASS SPECTROMETRY</scope>
    <scope>SUBUNIT</scope>
</reference>
<evidence type="ECO:0000250" key="1"/>
<evidence type="ECO:0000269" key="2">
    <source>
    </source>
</evidence>
<evidence type="ECO:0000269" key="3">
    <source>
    </source>
</evidence>
<evidence type="ECO:0000305" key="4"/>
<comment type="function">
    <text evidence="3">Phosphatase that hydrolyzes imidodiphosphate, 3-phosphohistidine and 6-phospholysine. Has broad substrate specificity and can also hydrolyze inorganic diphosphate, but with lower efficiency.</text>
</comment>
<comment type="catalytic activity">
    <reaction evidence="3">
        <text>diphosphate + H2O = 2 phosphate + H(+)</text>
        <dbReference type="Rhea" id="RHEA:24576"/>
        <dbReference type="ChEBI" id="CHEBI:15377"/>
        <dbReference type="ChEBI" id="CHEBI:15378"/>
        <dbReference type="ChEBI" id="CHEBI:33019"/>
        <dbReference type="ChEBI" id="CHEBI:43474"/>
        <dbReference type="EC" id="3.6.1.1"/>
    </reaction>
</comment>
<comment type="cofactor">
    <cofactor evidence="1">
        <name>Mg(2+)</name>
        <dbReference type="ChEBI" id="CHEBI:18420"/>
    </cofactor>
    <text evidence="1">Binds 1 Mg(2+) ion per subunit.</text>
</comment>
<comment type="subunit">
    <text evidence="2 3">Homodimer.</text>
</comment>
<comment type="subcellular location">
    <subcellularLocation>
        <location evidence="1">Cytoplasm</location>
    </subcellularLocation>
    <subcellularLocation>
        <location evidence="1">Nucleus</location>
    </subcellularLocation>
</comment>
<comment type="tissue specificity">
    <text evidence="3">Detected in liver (at protein level).</text>
</comment>
<comment type="similarity">
    <text evidence="4">Belongs to the HAD-like hydrolase superfamily.</text>
</comment>
<gene>
    <name type="primary">LHPP</name>
</gene>